<organism>
    <name type="scientific">Mycoplasma pneumoniae (strain ATCC 29342 / M129 / Subtype 1)</name>
    <name type="common">Mycoplasmoides pneumoniae</name>
    <dbReference type="NCBI Taxonomy" id="272634"/>
    <lineage>
        <taxon>Bacteria</taxon>
        <taxon>Bacillati</taxon>
        <taxon>Mycoplasmatota</taxon>
        <taxon>Mycoplasmoidales</taxon>
        <taxon>Mycoplasmoidaceae</taxon>
        <taxon>Mycoplasmoides</taxon>
    </lineage>
</organism>
<dbReference type="EMBL" id="U00089">
    <property type="protein sequence ID" value="AAB96323.1"/>
    <property type="molecule type" value="Genomic_DNA"/>
</dbReference>
<dbReference type="PIR" id="S74001">
    <property type="entry name" value="S74001"/>
</dbReference>
<dbReference type="RefSeq" id="NP_109844.1">
    <property type="nucleotide sequence ID" value="NC_000912.1"/>
</dbReference>
<dbReference type="RefSeq" id="WP_010874513.1">
    <property type="nucleotide sequence ID" value="NZ_OU342337.1"/>
</dbReference>
<dbReference type="PDB" id="1PA4">
    <property type="method" value="NMR"/>
    <property type="chains" value="A=1-116"/>
</dbReference>
<dbReference type="PDBsum" id="1PA4"/>
<dbReference type="BMRB" id="P75589"/>
<dbReference type="SMR" id="P75589"/>
<dbReference type="IntAct" id="P75589">
    <property type="interactions" value="2"/>
</dbReference>
<dbReference type="STRING" id="272634.MPN_156"/>
<dbReference type="EnsemblBacteria" id="AAB96323">
    <property type="protein sequence ID" value="AAB96323"/>
    <property type="gene ID" value="MPN_156"/>
</dbReference>
<dbReference type="GeneID" id="66609196"/>
<dbReference type="KEGG" id="mpn:MPN_156"/>
<dbReference type="PATRIC" id="fig|272634.6.peg.174"/>
<dbReference type="HOGENOM" id="CLU_089475_6_5_14"/>
<dbReference type="OrthoDB" id="400699at2"/>
<dbReference type="BioCyc" id="MPNE272634:G1GJ3-263-MONOMER"/>
<dbReference type="EvolutionaryTrace" id="P75589"/>
<dbReference type="Proteomes" id="UP000000808">
    <property type="component" value="Chromosome"/>
</dbReference>
<dbReference type="GO" id="GO:0005829">
    <property type="term" value="C:cytosol"/>
    <property type="evidence" value="ECO:0007669"/>
    <property type="project" value="TreeGrafter"/>
</dbReference>
<dbReference type="GO" id="GO:0043024">
    <property type="term" value="F:ribosomal small subunit binding"/>
    <property type="evidence" value="ECO:0007669"/>
    <property type="project" value="TreeGrafter"/>
</dbReference>
<dbReference type="GO" id="GO:0030490">
    <property type="term" value="P:maturation of SSU-rRNA"/>
    <property type="evidence" value="ECO:0007669"/>
    <property type="project" value="UniProtKB-UniRule"/>
</dbReference>
<dbReference type="Gene3D" id="3.30.300.20">
    <property type="match status" value="1"/>
</dbReference>
<dbReference type="HAMAP" id="MF_00003">
    <property type="entry name" value="RbfA"/>
    <property type="match status" value="1"/>
</dbReference>
<dbReference type="InterPro" id="IPR015946">
    <property type="entry name" value="KH_dom-like_a/b"/>
</dbReference>
<dbReference type="InterPro" id="IPR000238">
    <property type="entry name" value="RbfA"/>
</dbReference>
<dbReference type="InterPro" id="IPR023799">
    <property type="entry name" value="RbfA_dom_sf"/>
</dbReference>
<dbReference type="InterPro" id="IPR020053">
    <property type="entry name" value="Ribosome-bd_factorA_CS"/>
</dbReference>
<dbReference type="NCBIfam" id="TIGR00082">
    <property type="entry name" value="rbfA"/>
    <property type="match status" value="1"/>
</dbReference>
<dbReference type="PANTHER" id="PTHR33515">
    <property type="entry name" value="RIBOSOME-BINDING FACTOR A, CHLOROPLASTIC-RELATED"/>
    <property type="match status" value="1"/>
</dbReference>
<dbReference type="PANTHER" id="PTHR33515:SF1">
    <property type="entry name" value="RIBOSOME-BINDING FACTOR A, CHLOROPLASTIC-RELATED"/>
    <property type="match status" value="1"/>
</dbReference>
<dbReference type="Pfam" id="PF02033">
    <property type="entry name" value="RBFA"/>
    <property type="match status" value="1"/>
</dbReference>
<dbReference type="SUPFAM" id="SSF89919">
    <property type="entry name" value="Ribosome-binding factor A, RbfA"/>
    <property type="match status" value="1"/>
</dbReference>
<dbReference type="PROSITE" id="PS01319">
    <property type="entry name" value="RBFA"/>
    <property type="match status" value="1"/>
</dbReference>
<feature type="chain" id="PRO_0000102695" description="Ribosome-binding factor A">
    <location>
        <begin position="1"/>
        <end position="116"/>
    </location>
</feature>
<feature type="helix" evidence="4">
    <location>
        <begin position="8"/>
        <end position="21"/>
    </location>
</feature>
<feature type="strand" evidence="4">
    <location>
        <begin position="25"/>
        <end position="28"/>
    </location>
</feature>
<feature type="helix" evidence="4">
    <location>
        <begin position="30"/>
        <end position="33"/>
    </location>
</feature>
<feature type="strand" evidence="4">
    <location>
        <begin position="39"/>
        <end position="41"/>
    </location>
</feature>
<feature type="turn" evidence="4">
    <location>
        <begin position="42"/>
        <end position="44"/>
    </location>
</feature>
<feature type="strand" evidence="4">
    <location>
        <begin position="47"/>
        <end position="49"/>
    </location>
</feature>
<feature type="strand" evidence="4">
    <location>
        <begin position="54"/>
        <end position="58"/>
    </location>
</feature>
<feature type="helix" evidence="4">
    <location>
        <begin position="59"/>
        <end position="68"/>
    </location>
</feature>
<feature type="helix" evidence="4">
    <location>
        <begin position="70"/>
        <end position="78"/>
    </location>
</feature>
<feature type="helix" evidence="4">
    <location>
        <begin position="84"/>
        <end position="86"/>
    </location>
</feature>
<feature type="strand" evidence="4">
    <location>
        <begin position="93"/>
        <end position="95"/>
    </location>
</feature>
<accession>P75589</accession>
<protein>
    <recommendedName>
        <fullName evidence="1 2">Ribosome-binding factor A</fullName>
    </recommendedName>
</protein>
<keyword id="KW-0002">3D-structure</keyword>
<keyword id="KW-0963">Cytoplasm</keyword>
<keyword id="KW-1185">Reference proteome</keyword>
<keyword id="KW-0690">Ribosome biogenesis</keyword>
<reference key="1">
    <citation type="journal article" date="1996" name="Nucleic Acids Res.">
        <title>Complete sequence analysis of the genome of the bacterium Mycoplasma pneumoniae.</title>
        <authorList>
            <person name="Himmelreich R."/>
            <person name="Hilbert H."/>
            <person name="Plagens H."/>
            <person name="Pirkl E."/>
            <person name="Li B.-C."/>
            <person name="Herrmann R."/>
        </authorList>
    </citation>
    <scope>NUCLEOTIDE SEQUENCE [LARGE SCALE GENOMIC DNA]</scope>
    <source>
        <strain>ATCC 29342 / M129 / Subtype 1</strain>
    </source>
</reference>
<reference key="2">
    <citation type="journal article" date="2003" name="J. Struct. Funct. Genomics">
        <title>Solution structure of a putative ribosome binding protein from Mycoplasma pneumoniae and comparison to a distant homolog.</title>
        <authorList>
            <person name="Rubin S.M."/>
            <person name="Pelton J.G."/>
            <person name="Yokota H."/>
            <person name="Kim R."/>
            <person name="Wemmer D.E."/>
        </authorList>
    </citation>
    <scope>STRUCTURE BY NMR</scope>
    <scope>SUBUNIT</scope>
</reference>
<gene>
    <name evidence="1" type="primary">rbfA</name>
    <name type="ordered locus">MPN_156</name>
    <name type="ORF">MP675</name>
</gene>
<comment type="function">
    <text evidence="1">One of several proteins that assist in the late maturation steps of the functional core of the 30S ribosomal subunit. Associates with free 30S ribosomal subunits (but not with 30S subunits that are part of 70S ribosomes or polysomes). Required for efficient processing of 16S rRNA. May interact with the 5'-terminal helix region of 16S rRNA.</text>
</comment>
<comment type="subunit">
    <text evidence="1 3">Monomer (PubMed:15185964). Binds 30S ribosomal subunits, but not 50S ribosomal subunits or 70S ribosomes.</text>
</comment>
<comment type="subcellular location">
    <subcellularLocation>
        <location evidence="1">Cytoplasm</location>
    </subcellularLocation>
</comment>
<comment type="similarity">
    <text evidence="1">Belongs to the RbfA family.</text>
</comment>
<proteinExistence type="evidence at protein level"/>
<name>RBFA_MYCPN</name>
<sequence>MASYKKERLENDIIRLINRTVIHEIYNETVKTGHVTHVKLSDDLLHVTVYLDCYNREQIDRVVGAFNQAKGVFSRVLAHNLYLAKAVQIHFVKDKAIDNAMRIESIINSLKKSKPN</sequence>
<evidence type="ECO:0000255" key="1">
    <source>
        <dbReference type="HAMAP-Rule" id="MF_00003"/>
    </source>
</evidence>
<evidence type="ECO:0000303" key="2">
    <source>
    </source>
</evidence>
<evidence type="ECO:0000305" key="3">
    <source>
    </source>
</evidence>
<evidence type="ECO:0007829" key="4">
    <source>
        <dbReference type="PDB" id="1PA4"/>
    </source>
</evidence>